<name>AURK_CANAL</name>
<gene>
    <name type="primary">IPL1</name>
    <name type="ordered locus">CAALFM_C602320CA</name>
    <name type="ORF">CaO19.10978</name>
    <name type="ORF">CaO19.3474</name>
</gene>
<sequence>MMLPRNSPHRTESTLAYNNNNSNNNNNNNGSSLFQRKPLAPINSEFKISKPQHIKPTTHSHTFTTPTPKTRNTATTTTNNNNRNNHQYRNPNLNTSLVFTPTKNSSSSSSSHSSSLLSSSPFVEEPENQPESNHTRATSHYRTTSTSQYKSSANKDASHSLITSSKRKTSTKQTSESTNPKRRTTTTATQNTNNNKILNPSLSSSTIRFSTVSSSTSSSTTSSSSSSHTSPKPQQQLTLDDFEFGKILGKGKLGRVYCVKHKQSGLIFALKVMSKSEIMNLKLEKSLRREIEIQSNLYHINITRLYSWFHDSINIYLLLEYSIEGELYTHLKKLKRFDNIMASNYIFQITQALIFLHQRGIIHRDLKPENIMVSLDNQLKLSDFGWSVQINQNQNQNQIHNQTQTQKTPHQKKQKQKRLTICGTLDYLPPEMIESKSHDFSVDIWALGILCYELLVGKPPFEAINRNITYEKIAKVDIKYPSNLDVDAIDLISKLVVKDPNKRLSLKEVLNHNWIIKNKPKWPKNIYK</sequence>
<keyword id="KW-0067">ATP-binding</keyword>
<keyword id="KW-0131">Cell cycle</keyword>
<keyword id="KW-0137">Centromere</keyword>
<keyword id="KW-0158">Chromosome</keyword>
<keyword id="KW-0159">Chromosome partition</keyword>
<keyword id="KW-0963">Cytoplasm</keyword>
<keyword id="KW-0206">Cytoskeleton</keyword>
<keyword id="KW-0418">Kinase</keyword>
<keyword id="KW-0995">Kinetochore</keyword>
<keyword id="KW-0547">Nucleotide-binding</keyword>
<keyword id="KW-0539">Nucleus</keyword>
<keyword id="KW-1185">Reference proteome</keyword>
<keyword id="KW-0723">Serine/threonine-protein kinase</keyword>
<keyword id="KW-0808">Transferase</keyword>
<proteinExistence type="inferred from homology"/>
<accession>Q59S66</accession>
<accession>A0A1D8PPU6</accession>
<feature type="chain" id="PRO_0000086025" description="Aurora kinase">
    <location>
        <begin position="1"/>
        <end position="528"/>
    </location>
</feature>
<feature type="domain" description="Protein kinase" evidence="4">
    <location>
        <begin position="242"/>
        <end position="515"/>
    </location>
</feature>
<feature type="region of interest" description="Disordered" evidence="6">
    <location>
        <begin position="1"/>
        <end position="35"/>
    </location>
</feature>
<feature type="region of interest" description="Disordered" evidence="6">
    <location>
        <begin position="48"/>
        <end position="235"/>
    </location>
</feature>
<feature type="compositionally biased region" description="Low complexity" evidence="6">
    <location>
        <begin position="18"/>
        <end position="29"/>
    </location>
</feature>
<feature type="compositionally biased region" description="Low complexity" evidence="6">
    <location>
        <begin position="59"/>
        <end position="94"/>
    </location>
</feature>
<feature type="compositionally biased region" description="Polar residues" evidence="6">
    <location>
        <begin position="95"/>
        <end position="104"/>
    </location>
</feature>
<feature type="compositionally biased region" description="Low complexity" evidence="6">
    <location>
        <begin position="105"/>
        <end position="120"/>
    </location>
</feature>
<feature type="compositionally biased region" description="Polar residues" evidence="6">
    <location>
        <begin position="129"/>
        <end position="155"/>
    </location>
</feature>
<feature type="compositionally biased region" description="Low complexity" evidence="6">
    <location>
        <begin position="185"/>
        <end position="230"/>
    </location>
</feature>
<feature type="active site" description="Proton acceptor" evidence="4 5">
    <location>
        <position position="365"/>
    </location>
</feature>
<feature type="binding site" evidence="4">
    <location>
        <begin position="248"/>
        <end position="256"/>
    </location>
    <ligand>
        <name>ATP</name>
        <dbReference type="ChEBI" id="CHEBI:30616"/>
    </ligand>
</feature>
<feature type="binding site" evidence="4">
    <location>
        <position position="271"/>
    </location>
    <ligand>
        <name>ATP</name>
        <dbReference type="ChEBI" id="CHEBI:30616"/>
    </ligand>
</feature>
<evidence type="ECO:0000250" key="1"/>
<evidence type="ECO:0000250" key="2">
    <source>
        <dbReference type="UniProtKB" id="D6W3G1"/>
    </source>
</evidence>
<evidence type="ECO:0000250" key="3">
    <source>
        <dbReference type="UniProtKB" id="P38991"/>
    </source>
</evidence>
<evidence type="ECO:0000255" key="4">
    <source>
        <dbReference type="PROSITE-ProRule" id="PRU00159"/>
    </source>
</evidence>
<evidence type="ECO:0000255" key="5">
    <source>
        <dbReference type="PROSITE-ProRule" id="PRU10027"/>
    </source>
</evidence>
<evidence type="ECO:0000256" key="6">
    <source>
        <dbReference type="SAM" id="MobiDB-lite"/>
    </source>
</evidence>
<protein>
    <recommendedName>
        <fullName>Aurora kinase</fullName>
        <ecNumber evidence="3">2.7.11.1</ecNumber>
    </recommendedName>
    <alternativeName>
        <fullName>Spindle assembly checkpoint kinase</fullName>
    </alternativeName>
</protein>
<comment type="function">
    <text evidence="3">Component of the chromosomal passenger complex (CPC), a complex that acts as a key regulator of chromosome segregation and cytokinesis. Has a role in error-correction of aberrent kinetochore-microtubule attachments to ensure that sister kinetochores become bioriented and connect to opposite poles by promoting spindle assembly checkpoint signaling.</text>
</comment>
<comment type="catalytic activity">
    <reaction evidence="2">
        <text>L-seryl-[protein] + ATP = O-phospho-L-seryl-[protein] + ADP + H(+)</text>
        <dbReference type="Rhea" id="RHEA:17989"/>
        <dbReference type="Rhea" id="RHEA-COMP:9863"/>
        <dbReference type="Rhea" id="RHEA-COMP:11604"/>
        <dbReference type="ChEBI" id="CHEBI:15378"/>
        <dbReference type="ChEBI" id="CHEBI:29999"/>
        <dbReference type="ChEBI" id="CHEBI:30616"/>
        <dbReference type="ChEBI" id="CHEBI:83421"/>
        <dbReference type="ChEBI" id="CHEBI:456216"/>
        <dbReference type="EC" id="2.7.11.1"/>
    </reaction>
</comment>
<comment type="catalytic activity">
    <reaction>
        <text>L-threonyl-[protein] + ATP = O-phospho-L-threonyl-[protein] + ADP + H(+)</text>
        <dbReference type="Rhea" id="RHEA:46608"/>
        <dbReference type="Rhea" id="RHEA-COMP:11060"/>
        <dbReference type="Rhea" id="RHEA-COMP:11605"/>
        <dbReference type="ChEBI" id="CHEBI:15378"/>
        <dbReference type="ChEBI" id="CHEBI:30013"/>
        <dbReference type="ChEBI" id="CHEBI:30616"/>
        <dbReference type="ChEBI" id="CHEBI:61977"/>
        <dbReference type="ChEBI" id="CHEBI:456216"/>
        <dbReference type="EC" id="2.7.11.1"/>
    </reaction>
</comment>
<comment type="subcellular location">
    <subcellularLocation>
        <location evidence="1">Nucleus</location>
    </subcellularLocation>
    <subcellularLocation>
        <location evidence="1">Cytoplasm</location>
        <location evidence="1">Cytoskeleton</location>
        <location evidence="1">Spindle</location>
    </subcellularLocation>
    <subcellularLocation>
        <location evidence="1">Chromosome</location>
        <location evidence="1">Centromere</location>
        <location evidence="1">Kinetochore</location>
    </subcellularLocation>
    <text evidence="1">Associates with the mitotic spindle and on elongated and disassembling spindles. Also associated with the kinetochore (By similarity).</text>
</comment>
<comment type="similarity">
    <text evidence="4">Belongs to the protein kinase superfamily. Ser/Thr protein kinase family. Aurora subfamily.</text>
</comment>
<dbReference type="EC" id="2.7.11.1" evidence="3"/>
<dbReference type="EMBL" id="CP017628">
    <property type="protein sequence ID" value="AOW30167.1"/>
    <property type="molecule type" value="Genomic_DNA"/>
</dbReference>
<dbReference type="RefSeq" id="XP_712513.2">
    <property type="nucleotide sequence ID" value="XM_707420.2"/>
</dbReference>
<dbReference type="SMR" id="Q59S66"/>
<dbReference type="BioGRID" id="1228944">
    <property type="interactions" value="1"/>
</dbReference>
<dbReference type="FunCoup" id="Q59S66">
    <property type="interactions" value="1120"/>
</dbReference>
<dbReference type="STRING" id="237561.Q59S66"/>
<dbReference type="EnsemblFungi" id="C6_02320C_A-T">
    <property type="protein sequence ID" value="C6_02320C_A-T-p1"/>
    <property type="gene ID" value="C6_02320C_A"/>
</dbReference>
<dbReference type="GeneID" id="3645876"/>
<dbReference type="KEGG" id="cal:CAALFM_C602320CA"/>
<dbReference type="CGD" id="CAL0000183313">
    <property type="gene designation" value="IPL1"/>
</dbReference>
<dbReference type="VEuPathDB" id="FungiDB:C6_02320C_A"/>
<dbReference type="eggNOG" id="KOG0580">
    <property type="taxonomic scope" value="Eukaryota"/>
</dbReference>
<dbReference type="HOGENOM" id="CLU_000288_20_0_1"/>
<dbReference type="InParanoid" id="Q59S66"/>
<dbReference type="OrthoDB" id="377346at2759"/>
<dbReference type="PRO" id="PR:Q59S66"/>
<dbReference type="Proteomes" id="UP000000559">
    <property type="component" value="Chromosome 6"/>
</dbReference>
<dbReference type="GO" id="GO:0032133">
    <property type="term" value="C:chromosome passenger complex"/>
    <property type="evidence" value="ECO:0000318"/>
    <property type="project" value="GO_Central"/>
</dbReference>
<dbReference type="GO" id="GO:0005737">
    <property type="term" value="C:cytoplasm"/>
    <property type="evidence" value="ECO:0007669"/>
    <property type="project" value="UniProtKB-KW"/>
</dbReference>
<dbReference type="GO" id="GO:0000776">
    <property type="term" value="C:kinetochore"/>
    <property type="evidence" value="ECO:0000314"/>
    <property type="project" value="CGD"/>
</dbReference>
<dbReference type="GO" id="GO:0005634">
    <property type="term" value="C:nucleus"/>
    <property type="evidence" value="ECO:0000318"/>
    <property type="project" value="GO_Central"/>
</dbReference>
<dbReference type="GO" id="GO:0005876">
    <property type="term" value="C:spindle microtubule"/>
    <property type="evidence" value="ECO:0000318"/>
    <property type="project" value="GO_Central"/>
</dbReference>
<dbReference type="GO" id="GO:0051233">
    <property type="term" value="C:spindle midzone"/>
    <property type="evidence" value="ECO:0000318"/>
    <property type="project" value="GO_Central"/>
</dbReference>
<dbReference type="GO" id="GO:0000922">
    <property type="term" value="C:spindle pole"/>
    <property type="evidence" value="ECO:0000318"/>
    <property type="project" value="GO_Central"/>
</dbReference>
<dbReference type="GO" id="GO:0005524">
    <property type="term" value="F:ATP binding"/>
    <property type="evidence" value="ECO:0007669"/>
    <property type="project" value="UniProtKB-KW"/>
</dbReference>
<dbReference type="GO" id="GO:0106310">
    <property type="term" value="F:protein serine kinase activity"/>
    <property type="evidence" value="ECO:0007669"/>
    <property type="project" value="RHEA"/>
</dbReference>
<dbReference type="GO" id="GO:0004674">
    <property type="term" value="F:protein serine/threonine kinase activity"/>
    <property type="evidence" value="ECO:0007669"/>
    <property type="project" value="UniProtKB-KW"/>
</dbReference>
<dbReference type="GO" id="GO:0008608">
    <property type="term" value="P:attachment of spindle microtubules to kinetochore"/>
    <property type="evidence" value="ECO:0000315"/>
    <property type="project" value="CGD"/>
</dbReference>
<dbReference type="GO" id="GO:0007052">
    <property type="term" value="P:mitotic spindle organization"/>
    <property type="evidence" value="ECO:0000318"/>
    <property type="project" value="GO_Central"/>
</dbReference>
<dbReference type="GO" id="GO:0032465">
    <property type="term" value="P:regulation of cytokinesis"/>
    <property type="evidence" value="ECO:0000318"/>
    <property type="project" value="GO_Central"/>
</dbReference>
<dbReference type="CDD" id="cd14007">
    <property type="entry name" value="STKc_Aurora"/>
    <property type="match status" value="1"/>
</dbReference>
<dbReference type="FunFam" id="3.30.200.20:FF:000042">
    <property type="entry name" value="Aurora kinase A"/>
    <property type="match status" value="1"/>
</dbReference>
<dbReference type="FunFam" id="1.10.510.10:FF:001230">
    <property type="entry name" value="Spindle assembly checkpoint kinase"/>
    <property type="match status" value="1"/>
</dbReference>
<dbReference type="Gene3D" id="3.30.200.20">
    <property type="entry name" value="Phosphorylase Kinase, domain 1"/>
    <property type="match status" value="1"/>
</dbReference>
<dbReference type="Gene3D" id="1.10.510.10">
    <property type="entry name" value="Transferase(Phosphotransferase) domain 1"/>
    <property type="match status" value="1"/>
</dbReference>
<dbReference type="InterPro" id="IPR030616">
    <property type="entry name" value="Aur-like"/>
</dbReference>
<dbReference type="InterPro" id="IPR011009">
    <property type="entry name" value="Kinase-like_dom_sf"/>
</dbReference>
<dbReference type="InterPro" id="IPR000719">
    <property type="entry name" value="Prot_kinase_dom"/>
</dbReference>
<dbReference type="InterPro" id="IPR008271">
    <property type="entry name" value="Ser/Thr_kinase_AS"/>
</dbReference>
<dbReference type="PANTHER" id="PTHR24350">
    <property type="entry name" value="SERINE/THREONINE-PROTEIN KINASE IAL-RELATED"/>
    <property type="match status" value="1"/>
</dbReference>
<dbReference type="Pfam" id="PF00069">
    <property type="entry name" value="Pkinase"/>
    <property type="match status" value="1"/>
</dbReference>
<dbReference type="SMART" id="SM00220">
    <property type="entry name" value="S_TKc"/>
    <property type="match status" value="1"/>
</dbReference>
<dbReference type="SUPFAM" id="SSF56112">
    <property type="entry name" value="Protein kinase-like (PK-like)"/>
    <property type="match status" value="1"/>
</dbReference>
<dbReference type="PROSITE" id="PS50011">
    <property type="entry name" value="PROTEIN_KINASE_DOM"/>
    <property type="match status" value="1"/>
</dbReference>
<dbReference type="PROSITE" id="PS00108">
    <property type="entry name" value="PROTEIN_KINASE_ST"/>
    <property type="match status" value="1"/>
</dbReference>
<organism>
    <name type="scientific">Candida albicans (strain SC5314 / ATCC MYA-2876)</name>
    <name type="common">Yeast</name>
    <dbReference type="NCBI Taxonomy" id="237561"/>
    <lineage>
        <taxon>Eukaryota</taxon>
        <taxon>Fungi</taxon>
        <taxon>Dikarya</taxon>
        <taxon>Ascomycota</taxon>
        <taxon>Saccharomycotina</taxon>
        <taxon>Pichiomycetes</taxon>
        <taxon>Debaryomycetaceae</taxon>
        <taxon>Candida/Lodderomyces clade</taxon>
        <taxon>Candida</taxon>
    </lineage>
</organism>
<reference key="1">
    <citation type="journal article" date="2004" name="Proc. Natl. Acad. Sci. U.S.A.">
        <title>The diploid genome sequence of Candida albicans.</title>
        <authorList>
            <person name="Jones T."/>
            <person name="Federspiel N.A."/>
            <person name="Chibana H."/>
            <person name="Dungan J."/>
            <person name="Kalman S."/>
            <person name="Magee B.B."/>
            <person name="Newport G."/>
            <person name="Thorstenson Y.R."/>
            <person name="Agabian N."/>
            <person name="Magee P.T."/>
            <person name="Davis R.W."/>
            <person name="Scherer S."/>
        </authorList>
    </citation>
    <scope>NUCLEOTIDE SEQUENCE [LARGE SCALE GENOMIC DNA]</scope>
    <source>
        <strain>SC5314 / ATCC MYA-2876</strain>
    </source>
</reference>
<reference key="2">
    <citation type="journal article" date="2007" name="Genome Biol.">
        <title>Assembly of the Candida albicans genome into sixteen supercontigs aligned on the eight chromosomes.</title>
        <authorList>
            <person name="van het Hoog M."/>
            <person name="Rast T.J."/>
            <person name="Martchenko M."/>
            <person name="Grindle S."/>
            <person name="Dignard D."/>
            <person name="Hogues H."/>
            <person name="Cuomo C."/>
            <person name="Berriman M."/>
            <person name="Scherer S."/>
            <person name="Magee B.B."/>
            <person name="Whiteway M."/>
            <person name="Chibana H."/>
            <person name="Nantel A."/>
            <person name="Magee P.T."/>
        </authorList>
    </citation>
    <scope>GENOME REANNOTATION</scope>
    <source>
        <strain>SC5314 / ATCC MYA-2876</strain>
    </source>
</reference>
<reference key="3">
    <citation type="journal article" date="2013" name="Genome Biol.">
        <title>Assembly of a phased diploid Candida albicans genome facilitates allele-specific measurements and provides a simple model for repeat and indel structure.</title>
        <authorList>
            <person name="Muzzey D."/>
            <person name="Schwartz K."/>
            <person name="Weissman J.S."/>
            <person name="Sherlock G."/>
        </authorList>
    </citation>
    <scope>NUCLEOTIDE SEQUENCE [LARGE SCALE GENOMIC DNA]</scope>
    <scope>GENOME REANNOTATION</scope>
    <source>
        <strain>SC5314 / ATCC MYA-2876</strain>
    </source>
</reference>